<comment type="function">
    <text evidence="1">An essential GTPase which binds GTP, GDP and possibly (p)ppGpp with moderate affinity, with high nucleotide exchange rates and a fairly low GTP hydrolysis rate. Plays a role in control of the cell cycle, stress response, ribosome biogenesis and in those bacteria that undergo differentiation, in morphogenesis control.</text>
</comment>
<comment type="cofactor">
    <cofactor evidence="1">
        <name>Mg(2+)</name>
        <dbReference type="ChEBI" id="CHEBI:18420"/>
    </cofactor>
</comment>
<comment type="subunit">
    <text evidence="1">Monomer.</text>
</comment>
<comment type="subcellular location">
    <subcellularLocation>
        <location evidence="1">Cytoplasm</location>
    </subcellularLocation>
</comment>
<comment type="similarity">
    <text evidence="1">Belongs to the TRAFAC class OBG-HflX-like GTPase superfamily. OBG GTPase family.</text>
</comment>
<proteinExistence type="inferred from homology"/>
<keyword id="KW-0963">Cytoplasm</keyword>
<keyword id="KW-0342">GTP-binding</keyword>
<keyword id="KW-0378">Hydrolase</keyword>
<keyword id="KW-0460">Magnesium</keyword>
<keyword id="KW-0479">Metal-binding</keyword>
<keyword id="KW-0547">Nucleotide-binding</keyword>
<evidence type="ECO:0000255" key="1">
    <source>
        <dbReference type="HAMAP-Rule" id="MF_01454"/>
    </source>
</evidence>
<evidence type="ECO:0000255" key="2">
    <source>
        <dbReference type="PROSITE-ProRule" id="PRU01231"/>
    </source>
</evidence>
<gene>
    <name evidence="1" type="primary">obg</name>
    <name type="ordered locus">BH01560</name>
</gene>
<organism>
    <name type="scientific">Bartonella henselae (strain ATCC 49882 / DSM 28221 / CCUG 30454 / Houston 1)</name>
    <name type="common">Rochalimaea henselae</name>
    <dbReference type="NCBI Taxonomy" id="283166"/>
    <lineage>
        <taxon>Bacteria</taxon>
        <taxon>Pseudomonadati</taxon>
        <taxon>Pseudomonadota</taxon>
        <taxon>Alphaproteobacteria</taxon>
        <taxon>Hyphomicrobiales</taxon>
        <taxon>Bartonellaceae</taxon>
        <taxon>Bartonella</taxon>
    </lineage>
</organism>
<feature type="chain" id="PRO_0000385736" description="GTPase Obg">
    <location>
        <begin position="1"/>
        <end position="340"/>
    </location>
</feature>
<feature type="domain" description="Obg" evidence="2">
    <location>
        <begin position="1"/>
        <end position="159"/>
    </location>
</feature>
<feature type="domain" description="OBG-type G" evidence="1">
    <location>
        <begin position="160"/>
        <end position="327"/>
    </location>
</feature>
<feature type="binding site" evidence="1">
    <location>
        <begin position="166"/>
        <end position="173"/>
    </location>
    <ligand>
        <name>GTP</name>
        <dbReference type="ChEBI" id="CHEBI:37565"/>
    </ligand>
</feature>
<feature type="binding site" evidence="1">
    <location>
        <position position="173"/>
    </location>
    <ligand>
        <name>Mg(2+)</name>
        <dbReference type="ChEBI" id="CHEBI:18420"/>
    </ligand>
</feature>
<feature type="binding site" evidence="1">
    <location>
        <begin position="191"/>
        <end position="195"/>
    </location>
    <ligand>
        <name>GTP</name>
        <dbReference type="ChEBI" id="CHEBI:37565"/>
    </ligand>
</feature>
<feature type="binding site" evidence="1">
    <location>
        <position position="193"/>
    </location>
    <ligand>
        <name>Mg(2+)</name>
        <dbReference type="ChEBI" id="CHEBI:18420"/>
    </ligand>
</feature>
<feature type="binding site" evidence="1">
    <location>
        <begin position="212"/>
        <end position="215"/>
    </location>
    <ligand>
        <name>GTP</name>
        <dbReference type="ChEBI" id="CHEBI:37565"/>
    </ligand>
</feature>
<feature type="binding site" evidence="1">
    <location>
        <begin position="279"/>
        <end position="282"/>
    </location>
    <ligand>
        <name>GTP</name>
        <dbReference type="ChEBI" id="CHEBI:37565"/>
    </ligand>
</feature>
<feature type="binding site" evidence="1">
    <location>
        <begin position="308"/>
        <end position="310"/>
    </location>
    <ligand>
        <name>GTP</name>
        <dbReference type="ChEBI" id="CHEBI:37565"/>
    </ligand>
</feature>
<reference key="1">
    <citation type="journal article" date="2004" name="Proc. Natl. Acad. Sci. U.S.A.">
        <title>The louse-borne human pathogen Bartonella quintana is a genomic derivative of the zoonotic agent Bartonella henselae.</title>
        <authorList>
            <person name="Alsmark U.C.M."/>
            <person name="Frank A.C."/>
            <person name="Karlberg E.O."/>
            <person name="Legault B.-A."/>
            <person name="Ardell D.H."/>
            <person name="Canbaeck B."/>
            <person name="Eriksson A.-S."/>
            <person name="Naeslund A.K."/>
            <person name="Handley S.A."/>
            <person name="Huvet M."/>
            <person name="La Scola B."/>
            <person name="Holmberg M."/>
            <person name="Andersson S.G.E."/>
        </authorList>
    </citation>
    <scope>NUCLEOTIDE SEQUENCE [LARGE SCALE GENOMIC DNA]</scope>
    <source>
        <strain>ATCC 49882 / DSM 28221 / CCUG 30454 / Houston 1</strain>
    </source>
</reference>
<protein>
    <recommendedName>
        <fullName evidence="1">GTPase Obg</fullName>
        <ecNumber evidence="1">3.6.5.-</ecNumber>
    </recommendedName>
    <alternativeName>
        <fullName evidence="1">GTP-binding protein Obg</fullName>
    </alternativeName>
</protein>
<sequence length="340" mass="37296">MKFLDQAKVYIRSGNGGAGAISFRREKFIEFGGPDGGDGGRGGDVWALVVDGLNTLIDYRYQQHFRAKTGGHGKGRNMTGQKGDDIILKVPVGTQIFEEDNTTLICDLTEVGQRYRLAKGGNGGFGNLHFTTSTNRAPRRANPGLSGEERTLWLRLKLIADAGIIGLPNAGKSTFLASVTAAKPKVADYPFTTLYPHLGVARIDAREFVLADIPGLIEGAHEGVGIGDRFLGHVERCRVLFHLISAQEEDVVKAYQIVRNELKAYGNNLNDKTEIIALSQIDTLTIEERKAKQEFLQKVTGKSVMMFSAVSREGLENLLRAGAHIIEMARKKDVVREEQD</sequence>
<accession>Q6G4Z2</accession>
<name>OBG_BARHE</name>
<dbReference type="EC" id="3.6.5.-" evidence="1"/>
<dbReference type="EMBL" id="BX897699">
    <property type="protein sequence ID" value="CAF26968.1"/>
    <property type="molecule type" value="Genomic_DNA"/>
</dbReference>
<dbReference type="SMR" id="Q6G4Z2"/>
<dbReference type="PaxDb" id="283166-BH01560"/>
<dbReference type="EnsemblBacteria" id="CAF26968">
    <property type="protein sequence ID" value="CAF26968"/>
    <property type="gene ID" value="BH01560"/>
</dbReference>
<dbReference type="KEGG" id="bhe:BH01560"/>
<dbReference type="eggNOG" id="COG0536">
    <property type="taxonomic scope" value="Bacteria"/>
</dbReference>
<dbReference type="OrthoDB" id="9807318at2"/>
<dbReference type="Proteomes" id="UP000000421">
    <property type="component" value="Chromosome"/>
</dbReference>
<dbReference type="GO" id="GO:0005737">
    <property type="term" value="C:cytoplasm"/>
    <property type="evidence" value="ECO:0007669"/>
    <property type="project" value="UniProtKB-SubCell"/>
</dbReference>
<dbReference type="GO" id="GO:0005525">
    <property type="term" value="F:GTP binding"/>
    <property type="evidence" value="ECO:0007669"/>
    <property type="project" value="UniProtKB-UniRule"/>
</dbReference>
<dbReference type="GO" id="GO:0003924">
    <property type="term" value="F:GTPase activity"/>
    <property type="evidence" value="ECO:0007669"/>
    <property type="project" value="UniProtKB-UniRule"/>
</dbReference>
<dbReference type="GO" id="GO:0000287">
    <property type="term" value="F:magnesium ion binding"/>
    <property type="evidence" value="ECO:0007669"/>
    <property type="project" value="InterPro"/>
</dbReference>
<dbReference type="GO" id="GO:0042254">
    <property type="term" value="P:ribosome biogenesis"/>
    <property type="evidence" value="ECO:0007669"/>
    <property type="project" value="UniProtKB-UniRule"/>
</dbReference>
<dbReference type="CDD" id="cd01898">
    <property type="entry name" value="Obg"/>
    <property type="match status" value="1"/>
</dbReference>
<dbReference type="FunFam" id="2.70.210.12:FF:000001">
    <property type="entry name" value="GTPase Obg"/>
    <property type="match status" value="1"/>
</dbReference>
<dbReference type="Gene3D" id="2.70.210.12">
    <property type="entry name" value="GTP1/OBG domain"/>
    <property type="match status" value="1"/>
</dbReference>
<dbReference type="Gene3D" id="3.40.50.300">
    <property type="entry name" value="P-loop containing nucleotide triphosphate hydrolases"/>
    <property type="match status" value="1"/>
</dbReference>
<dbReference type="HAMAP" id="MF_01454">
    <property type="entry name" value="GTPase_Obg"/>
    <property type="match status" value="1"/>
</dbReference>
<dbReference type="InterPro" id="IPR031167">
    <property type="entry name" value="G_OBG"/>
</dbReference>
<dbReference type="InterPro" id="IPR006073">
    <property type="entry name" value="GTP-bd"/>
</dbReference>
<dbReference type="InterPro" id="IPR014100">
    <property type="entry name" value="GTP-bd_Obg/CgtA"/>
</dbReference>
<dbReference type="InterPro" id="IPR006074">
    <property type="entry name" value="GTP1-OBG_CS"/>
</dbReference>
<dbReference type="InterPro" id="IPR006169">
    <property type="entry name" value="GTP1_OBG_dom"/>
</dbReference>
<dbReference type="InterPro" id="IPR036726">
    <property type="entry name" value="GTP1_OBG_dom_sf"/>
</dbReference>
<dbReference type="InterPro" id="IPR045086">
    <property type="entry name" value="OBG_GTPase"/>
</dbReference>
<dbReference type="InterPro" id="IPR027417">
    <property type="entry name" value="P-loop_NTPase"/>
</dbReference>
<dbReference type="NCBIfam" id="TIGR02729">
    <property type="entry name" value="Obg_CgtA"/>
    <property type="match status" value="1"/>
</dbReference>
<dbReference type="NCBIfam" id="NF008955">
    <property type="entry name" value="PRK12297.1"/>
    <property type="match status" value="1"/>
</dbReference>
<dbReference type="NCBIfam" id="NF008956">
    <property type="entry name" value="PRK12299.1"/>
    <property type="match status" value="1"/>
</dbReference>
<dbReference type="PANTHER" id="PTHR11702">
    <property type="entry name" value="DEVELOPMENTALLY REGULATED GTP-BINDING PROTEIN-RELATED"/>
    <property type="match status" value="1"/>
</dbReference>
<dbReference type="PANTHER" id="PTHR11702:SF31">
    <property type="entry name" value="MITOCHONDRIAL RIBOSOME-ASSOCIATED GTPASE 2"/>
    <property type="match status" value="1"/>
</dbReference>
<dbReference type="Pfam" id="PF01018">
    <property type="entry name" value="GTP1_OBG"/>
    <property type="match status" value="1"/>
</dbReference>
<dbReference type="Pfam" id="PF01926">
    <property type="entry name" value="MMR_HSR1"/>
    <property type="match status" value="1"/>
</dbReference>
<dbReference type="PIRSF" id="PIRSF002401">
    <property type="entry name" value="GTP_bd_Obg/CgtA"/>
    <property type="match status" value="1"/>
</dbReference>
<dbReference type="PRINTS" id="PR00326">
    <property type="entry name" value="GTP1OBG"/>
</dbReference>
<dbReference type="SUPFAM" id="SSF82051">
    <property type="entry name" value="Obg GTP-binding protein N-terminal domain"/>
    <property type="match status" value="1"/>
</dbReference>
<dbReference type="SUPFAM" id="SSF52540">
    <property type="entry name" value="P-loop containing nucleoside triphosphate hydrolases"/>
    <property type="match status" value="1"/>
</dbReference>
<dbReference type="PROSITE" id="PS51710">
    <property type="entry name" value="G_OBG"/>
    <property type="match status" value="1"/>
</dbReference>
<dbReference type="PROSITE" id="PS00905">
    <property type="entry name" value="GTP1_OBG"/>
    <property type="match status" value="1"/>
</dbReference>
<dbReference type="PROSITE" id="PS51883">
    <property type="entry name" value="OBG"/>
    <property type="match status" value="1"/>
</dbReference>